<comment type="function">
    <text evidence="1">Possesses a potent antimicrobial activity against Gram-positive and Gram-negative bacteria. Probably acts by disturbing membrane functions with its amphipathic structure (By similarity).</text>
</comment>
<comment type="subcellular location">
    <subcellularLocation>
        <location evidence="3">Secreted</location>
    </subcellularLocation>
</comment>
<comment type="tissue specificity">
    <text evidence="4">Expressed by the skin glands.</text>
</comment>
<comment type="similarity">
    <text evidence="2">Belongs to the frog skin active peptide (FSAP) family. Dermaseptin subfamily.</text>
</comment>
<name>DRS2_PITAZ</name>
<proteinExistence type="evidence at protein level"/>
<sequence>GLWSKIKDVAAAAGKAALGAVNEALGEQ</sequence>
<reference key="1">
    <citation type="thesis" date="2006" institute="University of Ulster Coleraine" country="United Kingdom">
        <title>A genomic/proteomic approach to isolating and identifying bioactive peptides from the skin secretions of Phyllomedusa hypochondrialis azurea.</title>
        <authorList>
            <person name="Thompson A.H."/>
        </authorList>
    </citation>
    <scope>PROTEIN SEQUENCE</scope>
    <scope>SUBCELLULAR LOCATION</scope>
    <source>
        <tissue>Skin secretion</tissue>
    </source>
</reference>
<keyword id="KW-0878">Amphibian defense peptide</keyword>
<keyword id="KW-0044">Antibiotic</keyword>
<keyword id="KW-0929">Antimicrobial</keyword>
<keyword id="KW-0903">Direct protein sequencing</keyword>
<keyword id="KW-0964">Secreted</keyword>
<dbReference type="GO" id="GO:0005576">
    <property type="term" value="C:extracellular region"/>
    <property type="evidence" value="ECO:0007669"/>
    <property type="project" value="UniProtKB-SubCell"/>
</dbReference>
<dbReference type="GO" id="GO:0042742">
    <property type="term" value="P:defense response to bacterium"/>
    <property type="evidence" value="ECO:0007669"/>
    <property type="project" value="UniProtKB-KW"/>
</dbReference>
<dbReference type="InterPro" id="IPR022731">
    <property type="entry name" value="Dermaseptin_dom"/>
</dbReference>
<dbReference type="Pfam" id="PF12121">
    <property type="entry name" value="DD_K"/>
    <property type="match status" value="1"/>
</dbReference>
<organism>
    <name type="scientific">Pithecopus azureus</name>
    <name type="common">Orange-legged monkey tree frog</name>
    <name type="synonym">Phyllomedusa azurea</name>
    <dbReference type="NCBI Taxonomy" id="2034991"/>
    <lineage>
        <taxon>Eukaryota</taxon>
        <taxon>Metazoa</taxon>
        <taxon>Chordata</taxon>
        <taxon>Craniata</taxon>
        <taxon>Vertebrata</taxon>
        <taxon>Euteleostomi</taxon>
        <taxon>Amphibia</taxon>
        <taxon>Batrachia</taxon>
        <taxon>Anura</taxon>
        <taxon>Neobatrachia</taxon>
        <taxon>Hyloidea</taxon>
        <taxon>Hylidae</taxon>
        <taxon>Phyllomedusinae</taxon>
        <taxon>Pithecopus</taxon>
    </lineage>
</organism>
<protein>
    <recommendedName>
        <fullName>Dermaseptin-H2</fullName>
    </recommendedName>
    <alternativeName>
        <fullName>Dermaseptin-like peptide 2</fullName>
        <shortName>DMS2</shortName>
    </alternativeName>
</protein>
<evidence type="ECO:0000250" key="1">
    <source>
        <dbReference type="UniProtKB" id="P81487"/>
    </source>
</evidence>
<evidence type="ECO:0000255" key="2"/>
<evidence type="ECO:0000269" key="3">
    <source ref="1"/>
</evidence>
<evidence type="ECO:0000305" key="4">
    <source ref="1"/>
</evidence>
<feature type="peptide" id="PRO_0000250577" description="Dermaseptin-H2" evidence="3">
    <location>
        <begin position="1"/>
        <end position="28"/>
    </location>
</feature>
<accession>P84937</accession>